<reference key="1">
    <citation type="submission" date="1994-09" db="UniProtKB">
        <authorList>
            <person name="Bini L."/>
            <person name="Santucci A."/>
            <person name="Magi B."/>
            <person name="Marzocchi B."/>
            <person name="Sanchez-Campillo M."/>
            <person name="Comanducci M."/>
            <person name="Christianen G."/>
            <person name="Birkelund S."/>
            <person name="Vtretou E."/>
            <person name="Ratti G."/>
            <person name="Pallini V."/>
        </authorList>
    </citation>
    <scope>PROTEIN SEQUENCE</scope>
</reference>
<organism>
    <name type="scientific">Chlamydia trachomatis serovar L2 (strain ATCC VR-902B / DSM 19102 / 434/Bu)</name>
    <dbReference type="NCBI Taxonomy" id="471472"/>
    <lineage>
        <taxon>Bacteria</taxon>
        <taxon>Pseudomonadati</taxon>
        <taxon>Chlamydiota</taxon>
        <taxon>Chlamydiia</taxon>
        <taxon>Chlamydiales</taxon>
        <taxon>Chlamydiaceae</taxon>
        <taxon>Chlamydia/Chlamydophila group</taxon>
        <taxon>Chlamydia</taxon>
    </lineage>
</organism>
<comment type="miscellaneous">
    <text>On the 2D-gel the determined pI of this unknown protein is: 4.5, its MW is: 28 kDa.</text>
</comment>
<protein>
    <recommendedName>
        <fullName>Unknown protein from 2D-PAGE from elementary body</fullName>
    </recommendedName>
</protein>
<proteinExistence type="evidence at protein level"/>
<keyword id="KW-0903">Direct protein sequencing</keyword>
<feature type="chain" id="PRO_0000055534" description="Unknown protein from 2D-PAGE from elementary body">
    <location>
        <begin position="1"/>
        <end position="5" status="greater than"/>
    </location>
</feature>
<feature type="non-terminal residue">
    <location>
        <position position="5"/>
    </location>
</feature>
<sequence>XSGDS</sequence>
<name>UXA4_CHLT2</name>
<accession>P38005</accession>